<name>PRMA_SALNS</name>
<sequence length="293" mass="31984">MPWIQLKLNTTGANAEELSDALMEAGAVSITFQDTHDTPVFEPLPGETRLWGDTDVIGLFDAETDMKDVVAILEQHPLLGAGFAHKIEQLEDKDWEREWMDNFHPMRFGERLWICPSWRDIPDENAVNVMLDPGLAFGTGTHPTTSLCLQWLDGLDLNGKTVIDFGCGSGILAIAALKLGAAKAIGIDIDPQAIQASRDNAERNGVSDRLELYLPKDQPEAMKADVVVANILAGPLRELAPLISVLPVEGGLLGLSGILASQAESICDAYAELFTLDPVVEKEEWCRITGRKK</sequence>
<keyword id="KW-0963">Cytoplasm</keyword>
<keyword id="KW-0489">Methyltransferase</keyword>
<keyword id="KW-0949">S-adenosyl-L-methionine</keyword>
<keyword id="KW-0808">Transferase</keyword>
<protein>
    <recommendedName>
        <fullName evidence="1">Ribosomal protein L11 methyltransferase</fullName>
        <shortName evidence="1">L11 Mtase</shortName>
        <ecNumber evidence="1">2.1.1.-</ecNumber>
    </recommendedName>
</protein>
<reference key="1">
    <citation type="journal article" date="2011" name="J. Bacteriol.">
        <title>Comparative genomics of 28 Salmonella enterica isolates: evidence for CRISPR-mediated adaptive sublineage evolution.</title>
        <authorList>
            <person name="Fricke W.F."/>
            <person name="Mammel M.K."/>
            <person name="McDermott P.F."/>
            <person name="Tartera C."/>
            <person name="White D.G."/>
            <person name="Leclerc J.E."/>
            <person name="Ravel J."/>
            <person name="Cebula T.A."/>
        </authorList>
    </citation>
    <scope>NUCLEOTIDE SEQUENCE [LARGE SCALE GENOMIC DNA]</scope>
    <source>
        <strain>SL254</strain>
    </source>
</reference>
<accession>B4SUN8</accession>
<evidence type="ECO:0000255" key="1">
    <source>
        <dbReference type="HAMAP-Rule" id="MF_00735"/>
    </source>
</evidence>
<proteinExistence type="inferred from homology"/>
<gene>
    <name evidence="1" type="primary">prmA</name>
    <name type="ordered locus">SNSL254_A3646</name>
</gene>
<comment type="function">
    <text evidence="1">Methylates ribosomal protein L11.</text>
</comment>
<comment type="catalytic activity">
    <reaction evidence="1">
        <text>L-lysyl-[protein] + 3 S-adenosyl-L-methionine = N(6),N(6),N(6)-trimethyl-L-lysyl-[protein] + 3 S-adenosyl-L-homocysteine + 3 H(+)</text>
        <dbReference type="Rhea" id="RHEA:54192"/>
        <dbReference type="Rhea" id="RHEA-COMP:9752"/>
        <dbReference type="Rhea" id="RHEA-COMP:13826"/>
        <dbReference type="ChEBI" id="CHEBI:15378"/>
        <dbReference type="ChEBI" id="CHEBI:29969"/>
        <dbReference type="ChEBI" id="CHEBI:57856"/>
        <dbReference type="ChEBI" id="CHEBI:59789"/>
        <dbReference type="ChEBI" id="CHEBI:61961"/>
    </reaction>
</comment>
<comment type="subcellular location">
    <subcellularLocation>
        <location evidence="1">Cytoplasm</location>
    </subcellularLocation>
</comment>
<comment type="similarity">
    <text evidence="1">Belongs to the methyltransferase superfamily. PrmA family.</text>
</comment>
<feature type="chain" id="PRO_1000132823" description="Ribosomal protein L11 methyltransferase">
    <location>
        <begin position="1"/>
        <end position="293"/>
    </location>
</feature>
<feature type="binding site" evidence="1">
    <location>
        <position position="145"/>
    </location>
    <ligand>
        <name>S-adenosyl-L-methionine</name>
        <dbReference type="ChEBI" id="CHEBI:59789"/>
    </ligand>
</feature>
<feature type="binding site" evidence="1">
    <location>
        <position position="166"/>
    </location>
    <ligand>
        <name>S-adenosyl-L-methionine</name>
        <dbReference type="ChEBI" id="CHEBI:59789"/>
    </ligand>
</feature>
<feature type="binding site" evidence="1">
    <location>
        <position position="188"/>
    </location>
    <ligand>
        <name>S-adenosyl-L-methionine</name>
        <dbReference type="ChEBI" id="CHEBI:59789"/>
    </ligand>
</feature>
<feature type="binding site" evidence="1">
    <location>
        <position position="230"/>
    </location>
    <ligand>
        <name>S-adenosyl-L-methionine</name>
        <dbReference type="ChEBI" id="CHEBI:59789"/>
    </ligand>
</feature>
<dbReference type="EC" id="2.1.1.-" evidence="1"/>
<dbReference type="EMBL" id="CP001113">
    <property type="protein sequence ID" value="ACF65378.1"/>
    <property type="molecule type" value="Genomic_DNA"/>
</dbReference>
<dbReference type="RefSeq" id="WP_001145847.1">
    <property type="nucleotide sequence ID" value="NZ_CCMR01000001.1"/>
</dbReference>
<dbReference type="SMR" id="B4SUN8"/>
<dbReference type="KEGG" id="see:SNSL254_A3646"/>
<dbReference type="HOGENOM" id="CLU_049382_4_1_6"/>
<dbReference type="Proteomes" id="UP000008824">
    <property type="component" value="Chromosome"/>
</dbReference>
<dbReference type="GO" id="GO:0005829">
    <property type="term" value="C:cytosol"/>
    <property type="evidence" value="ECO:0007669"/>
    <property type="project" value="TreeGrafter"/>
</dbReference>
<dbReference type="GO" id="GO:0016279">
    <property type="term" value="F:protein-lysine N-methyltransferase activity"/>
    <property type="evidence" value="ECO:0007669"/>
    <property type="project" value="TreeGrafter"/>
</dbReference>
<dbReference type="GO" id="GO:0032259">
    <property type="term" value="P:methylation"/>
    <property type="evidence" value="ECO:0007669"/>
    <property type="project" value="UniProtKB-KW"/>
</dbReference>
<dbReference type="CDD" id="cd02440">
    <property type="entry name" value="AdoMet_MTases"/>
    <property type="match status" value="1"/>
</dbReference>
<dbReference type="FunFam" id="3.40.50.150:FF:000021">
    <property type="entry name" value="Ribosomal protein L11 methyltransferase"/>
    <property type="match status" value="1"/>
</dbReference>
<dbReference type="Gene3D" id="3.40.50.150">
    <property type="entry name" value="Vaccinia Virus protein VP39"/>
    <property type="match status" value="1"/>
</dbReference>
<dbReference type="HAMAP" id="MF_00735">
    <property type="entry name" value="Methyltr_PrmA"/>
    <property type="match status" value="1"/>
</dbReference>
<dbReference type="InterPro" id="IPR050078">
    <property type="entry name" value="Ribosomal_L11_MeTrfase_PrmA"/>
</dbReference>
<dbReference type="InterPro" id="IPR004498">
    <property type="entry name" value="Ribosomal_PrmA_MeTrfase"/>
</dbReference>
<dbReference type="InterPro" id="IPR029063">
    <property type="entry name" value="SAM-dependent_MTases_sf"/>
</dbReference>
<dbReference type="NCBIfam" id="TIGR00406">
    <property type="entry name" value="prmA"/>
    <property type="match status" value="1"/>
</dbReference>
<dbReference type="PANTHER" id="PTHR43648">
    <property type="entry name" value="ELECTRON TRANSFER FLAVOPROTEIN BETA SUBUNIT LYSINE METHYLTRANSFERASE"/>
    <property type="match status" value="1"/>
</dbReference>
<dbReference type="PANTHER" id="PTHR43648:SF1">
    <property type="entry name" value="ELECTRON TRANSFER FLAVOPROTEIN BETA SUBUNIT LYSINE METHYLTRANSFERASE"/>
    <property type="match status" value="1"/>
</dbReference>
<dbReference type="Pfam" id="PF06325">
    <property type="entry name" value="PrmA"/>
    <property type="match status" value="1"/>
</dbReference>
<dbReference type="PIRSF" id="PIRSF000401">
    <property type="entry name" value="RPL11_MTase"/>
    <property type="match status" value="1"/>
</dbReference>
<dbReference type="SUPFAM" id="SSF53335">
    <property type="entry name" value="S-adenosyl-L-methionine-dependent methyltransferases"/>
    <property type="match status" value="1"/>
</dbReference>
<organism>
    <name type="scientific">Salmonella newport (strain SL254)</name>
    <dbReference type="NCBI Taxonomy" id="423368"/>
    <lineage>
        <taxon>Bacteria</taxon>
        <taxon>Pseudomonadati</taxon>
        <taxon>Pseudomonadota</taxon>
        <taxon>Gammaproteobacteria</taxon>
        <taxon>Enterobacterales</taxon>
        <taxon>Enterobacteriaceae</taxon>
        <taxon>Salmonella</taxon>
    </lineage>
</organism>